<gene>
    <name evidence="1" type="primary">glnD</name>
    <name type="ordered locus">Rru_A3539</name>
</gene>
<dbReference type="EC" id="2.7.7.59" evidence="1"/>
<dbReference type="EC" id="3.1.4.-" evidence="1"/>
<dbReference type="EMBL" id="CP000230">
    <property type="protein sequence ID" value="ABC24333.1"/>
    <property type="molecule type" value="Genomic_DNA"/>
</dbReference>
<dbReference type="RefSeq" id="WP_011391286.1">
    <property type="nucleotide sequence ID" value="NC_007643.1"/>
</dbReference>
<dbReference type="RefSeq" id="YP_428620.1">
    <property type="nucleotide sequence ID" value="NC_007643.1"/>
</dbReference>
<dbReference type="SMR" id="Q2RNG2"/>
<dbReference type="STRING" id="269796.Rru_A3539"/>
<dbReference type="EnsemblBacteria" id="ABC24333">
    <property type="protein sequence ID" value="ABC24333"/>
    <property type="gene ID" value="Rru_A3539"/>
</dbReference>
<dbReference type="KEGG" id="rru:Rru_A3539"/>
<dbReference type="PATRIC" id="fig|269796.9.peg.3656"/>
<dbReference type="eggNOG" id="COG2844">
    <property type="taxonomic scope" value="Bacteria"/>
</dbReference>
<dbReference type="HOGENOM" id="CLU_012833_1_0_5"/>
<dbReference type="PhylomeDB" id="Q2RNG2"/>
<dbReference type="BRENDA" id="2.7.7.59">
    <property type="organism ID" value="5420"/>
</dbReference>
<dbReference type="Proteomes" id="UP000001929">
    <property type="component" value="Chromosome"/>
</dbReference>
<dbReference type="GO" id="GO:0008773">
    <property type="term" value="F:[protein-PII] uridylyltransferase activity"/>
    <property type="evidence" value="ECO:0007669"/>
    <property type="project" value="UniProtKB-UniRule"/>
</dbReference>
<dbReference type="GO" id="GO:0008081">
    <property type="term" value="F:phosphoric diester hydrolase activity"/>
    <property type="evidence" value="ECO:0007669"/>
    <property type="project" value="UniProtKB-UniRule"/>
</dbReference>
<dbReference type="GO" id="GO:0090293">
    <property type="term" value="P:nitrogen catabolite regulation of transcription"/>
    <property type="evidence" value="ECO:0000315"/>
    <property type="project" value="CACAO"/>
</dbReference>
<dbReference type="GO" id="GO:0009399">
    <property type="term" value="P:nitrogen fixation"/>
    <property type="evidence" value="ECO:0007669"/>
    <property type="project" value="UniProtKB-UniRule"/>
</dbReference>
<dbReference type="GO" id="GO:0045893">
    <property type="term" value="P:positive regulation of DNA-templated transcription"/>
    <property type="evidence" value="ECO:0000315"/>
    <property type="project" value="CACAO"/>
</dbReference>
<dbReference type="GO" id="GO:0018177">
    <property type="term" value="P:protein uridylylation"/>
    <property type="evidence" value="ECO:0000315"/>
    <property type="project" value="CACAO"/>
</dbReference>
<dbReference type="CDD" id="cd04899">
    <property type="entry name" value="ACT_ACR-UUR-like_2"/>
    <property type="match status" value="1"/>
</dbReference>
<dbReference type="CDD" id="cd04900">
    <property type="entry name" value="ACT_UUR-like_1"/>
    <property type="match status" value="1"/>
</dbReference>
<dbReference type="CDD" id="cd00077">
    <property type="entry name" value="HDc"/>
    <property type="match status" value="1"/>
</dbReference>
<dbReference type="CDD" id="cd05401">
    <property type="entry name" value="NT_GlnE_GlnD_like"/>
    <property type="match status" value="1"/>
</dbReference>
<dbReference type="Gene3D" id="3.30.70.260">
    <property type="match status" value="1"/>
</dbReference>
<dbReference type="Gene3D" id="3.30.460.10">
    <property type="entry name" value="Beta Polymerase, domain 2"/>
    <property type="match status" value="1"/>
</dbReference>
<dbReference type="Gene3D" id="1.10.3090.10">
    <property type="entry name" value="cca-adding enzyme, domain 2"/>
    <property type="match status" value="1"/>
</dbReference>
<dbReference type="HAMAP" id="MF_00277">
    <property type="entry name" value="PII_uridylyl_transf"/>
    <property type="match status" value="1"/>
</dbReference>
<dbReference type="InterPro" id="IPR045865">
    <property type="entry name" value="ACT-like_dom_sf"/>
</dbReference>
<dbReference type="InterPro" id="IPR002912">
    <property type="entry name" value="ACT_dom"/>
</dbReference>
<dbReference type="InterPro" id="IPR003607">
    <property type="entry name" value="HD/PDEase_dom"/>
</dbReference>
<dbReference type="InterPro" id="IPR006674">
    <property type="entry name" value="HD_domain"/>
</dbReference>
<dbReference type="InterPro" id="IPR043519">
    <property type="entry name" value="NT_sf"/>
</dbReference>
<dbReference type="InterPro" id="IPR013546">
    <property type="entry name" value="PII_UdlTrfase/GS_AdlTrfase"/>
</dbReference>
<dbReference type="InterPro" id="IPR002934">
    <property type="entry name" value="Polymerase_NTP_transf_dom"/>
</dbReference>
<dbReference type="InterPro" id="IPR010043">
    <property type="entry name" value="UTase/UR"/>
</dbReference>
<dbReference type="NCBIfam" id="NF003467">
    <property type="entry name" value="PRK05092.1"/>
    <property type="match status" value="1"/>
</dbReference>
<dbReference type="NCBIfam" id="TIGR01693">
    <property type="entry name" value="UTase_glnD"/>
    <property type="match status" value="1"/>
</dbReference>
<dbReference type="PANTHER" id="PTHR47320">
    <property type="entry name" value="BIFUNCTIONAL URIDYLYLTRANSFERASE/URIDYLYL-REMOVING ENZYME"/>
    <property type="match status" value="1"/>
</dbReference>
<dbReference type="PANTHER" id="PTHR47320:SF1">
    <property type="entry name" value="BIFUNCTIONAL URIDYLYLTRANSFERASE_URIDYLYL-REMOVING ENZYME"/>
    <property type="match status" value="1"/>
</dbReference>
<dbReference type="Pfam" id="PF24931">
    <property type="entry name" value="ACT_ACR9_3rd"/>
    <property type="match status" value="1"/>
</dbReference>
<dbReference type="Pfam" id="PF08335">
    <property type="entry name" value="GlnD_UR_UTase"/>
    <property type="match status" value="1"/>
</dbReference>
<dbReference type="Pfam" id="PF01966">
    <property type="entry name" value="HD"/>
    <property type="match status" value="1"/>
</dbReference>
<dbReference type="Pfam" id="PF01909">
    <property type="entry name" value="NTP_transf_2"/>
    <property type="match status" value="1"/>
</dbReference>
<dbReference type="PIRSF" id="PIRSF006288">
    <property type="entry name" value="PII_uridyltransf"/>
    <property type="match status" value="1"/>
</dbReference>
<dbReference type="SMART" id="SM00471">
    <property type="entry name" value="HDc"/>
    <property type="match status" value="1"/>
</dbReference>
<dbReference type="SUPFAM" id="SSF55021">
    <property type="entry name" value="ACT-like"/>
    <property type="match status" value="2"/>
</dbReference>
<dbReference type="SUPFAM" id="SSF81301">
    <property type="entry name" value="Nucleotidyltransferase"/>
    <property type="match status" value="1"/>
</dbReference>
<dbReference type="SUPFAM" id="SSF81593">
    <property type="entry name" value="Nucleotidyltransferase substrate binding subunit/domain"/>
    <property type="match status" value="1"/>
</dbReference>
<dbReference type="SUPFAM" id="SSF81891">
    <property type="entry name" value="Poly A polymerase C-terminal region-like"/>
    <property type="match status" value="1"/>
</dbReference>
<dbReference type="PROSITE" id="PS51671">
    <property type="entry name" value="ACT"/>
    <property type="match status" value="2"/>
</dbReference>
<dbReference type="PROSITE" id="PS51831">
    <property type="entry name" value="HD"/>
    <property type="match status" value="1"/>
</dbReference>
<organism>
    <name type="scientific">Rhodospirillum rubrum (strain ATCC 11170 / ATH 1.1.1 / DSM 467 / LMG 4362 / NCIMB 8255 / S1)</name>
    <dbReference type="NCBI Taxonomy" id="269796"/>
    <lineage>
        <taxon>Bacteria</taxon>
        <taxon>Pseudomonadati</taxon>
        <taxon>Pseudomonadota</taxon>
        <taxon>Alphaproteobacteria</taxon>
        <taxon>Rhodospirillales</taxon>
        <taxon>Rhodospirillaceae</taxon>
        <taxon>Rhodospirillum</taxon>
    </lineage>
</organism>
<accession>Q2RNG2</accession>
<comment type="function">
    <text evidence="1">Modifies, by uridylylation and deuridylylation, the PII regulatory proteins (GlnB and homologs), in response to the nitrogen status of the cell that GlnD senses through the glutamine level. Under low glutamine levels, catalyzes the conversion of the PII proteins and UTP to PII-UMP and PPi, while under higher glutamine levels, GlnD hydrolyzes PII-UMP to PII and UMP (deuridylylation). Thus, controls uridylylation state and activity of the PII proteins, and plays an important role in the regulation of nitrogen fixation and metabolism.</text>
</comment>
<comment type="catalytic activity">
    <reaction evidence="1">
        <text>[protein-PII]-L-tyrosine + UTP = [protein-PII]-uridylyl-L-tyrosine + diphosphate</text>
        <dbReference type="Rhea" id="RHEA:13673"/>
        <dbReference type="Rhea" id="RHEA-COMP:12147"/>
        <dbReference type="Rhea" id="RHEA-COMP:12148"/>
        <dbReference type="ChEBI" id="CHEBI:33019"/>
        <dbReference type="ChEBI" id="CHEBI:46398"/>
        <dbReference type="ChEBI" id="CHEBI:46858"/>
        <dbReference type="ChEBI" id="CHEBI:90602"/>
        <dbReference type="EC" id="2.7.7.59"/>
    </reaction>
</comment>
<comment type="catalytic activity">
    <reaction evidence="1">
        <text>[protein-PII]-uridylyl-L-tyrosine + H2O = [protein-PII]-L-tyrosine + UMP + H(+)</text>
        <dbReference type="Rhea" id="RHEA:48600"/>
        <dbReference type="Rhea" id="RHEA-COMP:12147"/>
        <dbReference type="Rhea" id="RHEA-COMP:12148"/>
        <dbReference type="ChEBI" id="CHEBI:15377"/>
        <dbReference type="ChEBI" id="CHEBI:15378"/>
        <dbReference type="ChEBI" id="CHEBI:46858"/>
        <dbReference type="ChEBI" id="CHEBI:57865"/>
        <dbReference type="ChEBI" id="CHEBI:90602"/>
    </reaction>
</comment>
<comment type="cofactor">
    <cofactor evidence="1">
        <name>Mg(2+)</name>
        <dbReference type="ChEBI" id="CHEBI:18420"/>
    </cofactor>
</comment>
<comment type="activity regulation">
    <text evidence="1">Uridylyltransferase (UTase) activity is inhibited by glutamine, while glutamine activates uridylyl-removing (UR) activity.</text>
</comment>
<comment type="domain">
    <text evidence="1">Has four distinct domains: an N-terminal nucleotidyltransferase (NT) domain responsible for UTase activity, a central HD domain that encodes UR activity, and two C-terminal ACT domains that seem to have a role in glutamine sensing.</text>
</comment>
<comment type="similarity">
    <text evidence="1">Belongs to the GlnD family.</text>
</comment>
<protein>
    <recommendedName>
        <fullName evidence="1">Bifunctional uridylyltransferase/uridylyl-removing enzyme</fullName>
        <shortName evidence="1">UTase/UR</shortName>
    </recommendedName>
    <alternativeName>
        <fullName evidence="1">Bifunctional [protein-PII] modification enzyme</fullName>
    </alternativeName>
    <alternativeName>
        <fullName evidence="1">Bifunctional nitrogen sensor protein</fullName>
    </alternativeName>
    <domain>
        <recommendedName>
            <fullName evidence="1">[Protein-PII] uridylyltransferase</fullName>
            <shortName evidence="1">PII uridylyltransferase</shortName>
            <shortName evidence="1">UTase</shortName>
            <ecNumber evidence="1">2.7.7.59</ecNumber>
        </recommendedName>
    </domain>
    <domain>
        <recommendedName>
            <fullName evidence="1">[Protein-PII]-UMP uridylyl-removing enzyme</fullName>
            <shortName evidence="1">UR</shortName>
            <ecNumber evidence="1">3.1.4.-</ecNumber>
        </recommendedName>
    </domain>
</protein>
<sequence length="936" mass="105094">MTIPRIRQPRAVIDRKALTVVLEDLAATVTDNRERRARLLAVLKGALGDGRAEVRRRFLEEKGTGAAVFAENSHLMDQIIRLLFDFTTTHVYPRANRTIGEQMTVLAVGGYGRGEMSPQSDVDLLFLLPYKATPLHEQVVEYMLYTLWDMGLKVGHATRSIEECIRQARGDLTIRTAMLETRYLWGDRALYGQLKTKFWTGVVTGTGPDFVEAKLAERDERHLRMGDSRYVLEPNIKDGKGGLRDLHTLLWIARYIYGVSDMRELVELGVLSADAATKFGRARAFLWTVRCHLHYLADRPEERLTFDVQPAIAARMGYTDRNSGRGVERFMKHYFLMAKTVGDLTRIFCAVLEDQQKRRPILSIATLLMRKRNLGDFVLDGGRLAVAGRGAFREHPLQLISLFKVAHDHGLDIHPDTLRLVTEHLPTVTLLRNDAKANALFMEILTSRKDPELALRQLSESGVLARFIPDFGRVTAQMQFDMYHVYTTDEHTIRAIGLLHRLETGALRDRMPAAADAVHKVQSRRALYLAVLLHDIAKGRGGDHSILGAEVAMRLGPRLGMSEEETETVAWLVRHHLDMSRTAFKRDLDDIKTILDFTGLVQSVERLHLLLALTTVDILAVGPAVWNNWKSSLLRELYTHSKDVLTSGFQAEARDKRVAHKREELAAALADWPQASRERYLDLHYPAYWLTFDSATHLRHARMLRRARDAGLTVAVEVLPDPERAVSEVLVATDDHPGLFSKIAGAMALAGVNILDAKITTMSDGGALDIFTVQTLEGHAIEKEERIARLAKTVRDVLTGDLPLEKALRRQPPRLPERTRHLTVPPRVIVDNQASKTHTVIEINGRDRPGFLYAVTRALTDVAVQISSARVSTYGERVVDSFYVKDVFGMKIVHRAKLAQIREALEAAITQTVPRKVEEGAEQGAEKADAGEIVAA</sequence>
<feature type="chain" id="PRO_0000231691" description="Bifunctional uridylyltransferase/uridylyl-removing enzyme">
    <location>
        <begin position="1"/>
        <end position="936"/>
    </location>
</feature>
<feature type="domain" description="HD" evidence="2">
    <location>
        <begin position="488"/>
        <end position="610"/>
    </location>
</feature>
<feature type="domain" description="ACT 1" evidence="1">
    <location>
        <begin position="728"/>
        <end position="809"/>
    </location>
</feature>
<feature type="domain" description="ACT 2" evidence="1">
    <location>
        <begin position="840"/>
        <end position="915"/>
    </location>
</feature>
<feature type="region of interest" description="Uridylyltransferase">
    <location>
        <begin position="1"/>
        <end position="372"/>
    </location>
</feature>
<feature type="region of interest" description="Uridylyl-removing">
    <location>
        <begin position="373"/>
        <end position="727"/>
    </location>
</feature>
<feature type="region of interest" description="Disordered" evidence="3">
    <location>
        <begin position="915"/>
        <end position="936"/>
    </location>
</feature>
<feature type="compositionally biased region" description="Basic and acidic residues" evidence="3">
    <location>
        <begin position="915"/>
        <end position="930"/>
    </location>
</feature>
<evidence type="ECO:0000255" key="1">
    <source>
        <dbReference type="HAMAP-Rule" id="MF_00277"/>
    </source>
</evidence>
<evidence type="ECO:0000255" key="2">
    <source>
        <dbReference type="PROSITE-ProRule" id="PRU01175"/>
    </source>
</evidence>
<evidence type="ECO:0000256" key="3">
    <source>
        <dbReference type="SAM" id="MobiDB-lite"/>
    </source>
</evidence>
<reference key="1">
    <citation type="journal article" date="2011" name="Stand. Genomic Sci.">
        <title>Complete genome sequence of Rhodospirillum rubrum type strain (S1).</title>
        <authorList>
            <person name="Munk A.C."/>
            <person name="Copeland A."/>
            <person name="Lucas S."/>
            <person name="Lapidus A."/>
            <person name="Del Rio T.G."/>
            <person name="Barry K."/>
            <person name="Detter J.C."/>
            <person name="Hammon N."/>
            <person name="Israni S."/>
            <person name="Pitluck S."/>
            <person name="Brettin T."/>
            <person name="Bruce D."/>
            <person name="Han C."/>
            <person name="Tapia R."/>
            <person name="Gilna P."/>
            <person name="Schmutz J."/>
            <person name="Larimer F."/>
            <person name="Land M."/>
            <person name="Kyrpides N.C."/>
            <person name="Mavromatis K."/>
            <person name="Richardson P."/>
            <person name="Rohde M."/>
            <person name="Goeker M."/>
            <person name="Klenk H.P."/>
            <person name="Zhang Y."/>
            <person name="Roberts G.P."/>
            <person name="Reslewic S."/>
            <person name="Schwartz D.C."/>
        </authorList>
    </citation>
    <scope>NUCLEOTIDE SEQUENCE [LARGE SCALE GENOMIC DNA]</scope>
    <source>
        <strain>ATCC 11170 / ATH 1.1.1 / DSM 467 / LMG 4362 / NCIMB 8255 / S1</strain>
    </source>
</reference>
<proteinExistence type="inferred from homology"/>
<keyword id="KW-0378">Hydrolase</keyword>
<keyword id="KW-0460">Magnesium</keyword>
<keyword id="KW-0511">Multifunctional enzyme</keyword>
<keyword id="KW-0535">Nitrogen fixation</keyword>
<keyword id="KW-0548">Nucleotidyltransferase</keyword>
<keyword id="KW-1185">Reference proteome</keyword>
<keyword id="KW-0677">Repeat</keyword>
<keyword id="KW-0808">Transferase</keyword>
<name>GLND_RHORT</name>